<dbReference type="EC" id="3.1.-.-" evidence="1"/>
<dbReference type="EC" id="5.6.2.4" evidence="1"/>
<dbReference type="EMBL" id="BA000016">
    <property type="protein sequence ID" value="BAB79727.1"/>
    <property type="molecule type" value="Genomic_DNA"/>
</dbReference>
<dbReference type="RefSeq" id="WP_011009572.1">
    <property type="nucleotide sequence ID" value="NC_003366.1"/>
</dbReference>
<dbReference type="SMR" id="Q8XPE2"/>
<dbReference type="STRING" id="195102.gene:10489249"/>
<dbReference type="KEGG" id="cpe:CPE0021"/>
<dbReference type="HOGENOM" id="CLU_001114_3_1_9"/>
<dbReference type="Proteomes" id="UP000000818">
    <property type="component" value="Chromosome"/>
</dbReference>
<dbReference type="GO" id="GO:0005829">
    <property type="term" value="C:cytosol"/>
    <property type="evidence" value="ECO:0007669"/>
    <property type="project" value="TreeGrafter"/>
</dbReference>
<dbReference type="GO" id="GO:0033202">
    <property type="term" value="C:DNA helicase complex"/>
    <property type="evidence" value="ECO:0007669"/>
    <property type="project" value="TreeGrafter"/>
</dbReference>
<dbReference type="GO" id="GO:0043138">
    <property type="term" value="F:3'-5' DNA helicase activity"/>
    <property type="evidence" value="ECO:0007669"/>
    <property type="project" value="UniProtKB-UniRule"/>
</dbReference>
<dbReference type="GO" id="GO:0008408">
    <property type="term" value="F:3'-5' exonuclease activity"/>
    <property type="evidence" value="ECO:0007669"/>
    <property type="project" value="UniProtKB-UniRule"/>
</dbReference>
<dbReference type="GO" id="GO:0005524">
    <property type="term" value="F:ATP binding"/>
    <property type="evidence" value="ECO:0007669"/>
    <property type="project" value="UniProtKB-UniRule"/>
</dbReference>
<dbReference type="GO" id="GO:0016887">
    <property type="term" value="F:ATP hydrolysis activity"/>
    <property type="evidence" value="ECO:0007669"/>
    <property type="project" value="RHEA"/>
</dbReference>
<dbReference type="GO" id="GO:0003690">
    <property type="term" value="F:double-stranded DNA binding"/>
    <property type="evidence" value="ECO:0007669"/>
    <property type="project" value="UniProtKB-UniRule"/>
</dbReference>
<dbReference type="GO" id="GO:0000724">
    <property type="term" value="P:double-strand break repair via homologous recombination"/>
    <property type="evidence" value="ECO:0007669"/>
    <property type="project" value="UniProtKB-UniRule"/>
</dbReference>
<dbReference type="CDD" id="cd17932">
    <property type="entry name" value="DEXQc_UvrD"/>
    <property type="match status" value="1"/>
</dbReference>
<dbReference type="FunFam" id="3.40.50.300:FF:001236">
    <property type="entry name" value="ATP-dependent helicase/nuclease subunit A"/>
    <property type="match status" value="1"/>
</dbReference>
<dbReference type="Gene3D" id="1.10.274.50">
    <property type="match status" value="1"/>
</dbReference>
<dbReference type="Gene3D" id="3.90.320.10">
    <property type="match status" value="1"/>
</dbReference>
<dbReference type="Gene3D" id="3.40.50.300">
    <property type="entry name" value="P-loop containing nucleotide triphosphate hydrolases"/>
    <property type="match status" value="4"/>
</dbReference>
<dbReference type="HAMAP" id="MF_01451">
    <property type="entry name" value="AddA"/>
    <property type="match status" value="1"/>
</dbReference>
<dbReference type="InterPro" id="IPR014152">
    <property type="entry name" value="AddA"/>
</dbReference>
<dbReference type="InterPro" id="IPR014017">
    <property type="entry name" value="DNA_helicase_UvrD-like_C"/>
</dbReference>
<dbReference type="InterPro" id="IPR000212">
    <property type="entry name" value="DNA_helicase_UvrD/REP"/>
</dbReference>
<dbReference type="InterPro" id="IPR027417">
    <property type="entry name" value="P-loop_NTPase"/>
</dbReference>
<dbReference type="InterPro" id="IPR011604">
    <property type="entry name" value="PDDEXK-like_dom_sf"/>
</dbReference>
<dbReference type="InterPro" id="IPR038726">
    <property type="entry name" value="PDDEXK_AddAB-type"/>
</dbReference>
<dbReference type="InterPro" id="IPR011335">
    <property type="entry name" value="Restrct_endonuc-II-like"/>
</dbReference>
<dbReference type="InterPro" id="IPR014016">
    <property type="entry name" value="UvrD-like_ATP-bd"/>
</dbReference>
<dbReference type="NCBIfam" id="TIGR02785">
    <property type="entry name" value="addA_Gpos"/>
    <property type="match status" value="1"/>
</dbReference>
<dbReference type="PANTHER" id="PTHR11070:SF48">
    <property type="entry name" value="ATP-DEPENDENT HELICASE_NUCLEASE SUBUNIT A"/>
    <property type="match status" value="1"/>
</dbReference>
<dbReference type="PANTHER" id="PTHR11070">
    <property type="entry name" value="UVRD / RECB / PCRA DNA HELICASE FAMILY MEMBER"/>
    <property type="match status" value="1"/>
</dbReference>
<dbReference type="Pfam" id="PF12705">
    <property type="entry name" value="PDDEXK_1"/>
    <property type="match status" value="1"/>
</dbReference>
<dbReference type="Pfam" id="PF00580">
    <property type="entry name" value="UvrD-helicase"/>
    <property type="match status" value="1"/>
</dbReference>
<dbReference type="Pfam" id="PF13361">
    <property type="entry name" value="UvrD_C"/>
    <property type="match status" value="1"/>
</dbReference>
<dbReference type="SUPFAM" id="SSF52540">
    <property type="entry name" value="P-loop containing nucleoside triphosphate hydrolases"/>
    <property type="match status" value="1"/>
</dbReference>
<dbReference type="SUPFAM" id="SSF52980">
    <property type="entry name" value="Restriction endonuclease-like"/>
    <property type="match status" value="1"/>
</dbReference>
<dbReference type="PROSITE" id="PS51198">
    <property type="entry name" value="UVRD_HELICASE_ATP_BIND"/>
    <property type="match status" value="1"/>
</dbReference>
<dbReference type="PROSITE" id="PS51217">
    <property type="entry name" value="UVRD_HELICASE_CTER"/>
    <property type="match status" value="1"/>
</dbReference>
<comment type="function">
    <text evidence="1">The heterodimer acts as both an ATP-dependent DNA helicase and an ATP-dependent, dual-direction single-stranded exonuclease. Recognizes the chi site generating a DNA molecule suitable for the initiation of homologous recombination. The AddA nuclease domain is required for chi fragment generation; this subunit has the helicase and 3' -&gt; 5' nuclease activities.</text>
</comment>
<comment type="catalytic activity">
    <reaction evidence="1">
        <text>Couples ATP hydrolysis with the unwinding of duplex DNA by translocating in the 3'-5' direction.</text>
        <dbReference type="EC" id="5.6.2.4"/>
    </reaction>
</comment>
<comment type="catalytic activity">
    <reaction evidence="1">
        <text>ATP + H2O = ADP + phosphate + H(+)</text>
        <dbReference type="Rhea" id="RHEA:13065"/>
        <dbReference type="ChEBI" id="CHEBI:15377"/>
        <dbReference type="ChEBI" id="CHEBI:15378"/>
        <dbReference type="ChEBI" id="CHEBI:30616"/>
        <dbReference type="ChEBI" id="CHEBI:43474"/>
        <dbReference type="ChEBI" id="CHEBI:456216"/>
        <dbReference type="EC" id="5.6.2.4"/>
    </reaction>
</comment>
<comment type="cofactor">
    <cofactor evidence="1">
        <name>Mg(2+)</name>
        <dbReference type="ChEBI" id="CHEBI:18420"/>
    </cofactor>
</comment>
<comment type="subunit">
    <text evidence="1">Heterodimer of AddA and AddB/RexB.</text>
</comment>
<comment type="similarity">
    <text evidence="1">Belongs to the helicase family. AddA subfamily.</text>
</comment>
<protein>
    <recommendedName>
        <fullName evidence="1">ATP-dependent helicase/nuclease subunit A</fullName>
        <ecNumber evidence="1">3.1.-.-</ecNumber>
        <ecNumber evidence="1">5.6.2.4</ecNumber>
    </recommendedName>
    <alternativeName>
        <fullName evidence="1">ATP-dependent helicase/nuclease AddA</fullName>
    </alternativeName>
    <alternativeName>
        <fullName evidence="1">DNA 3'-5' helicase AddA</fullName>
    </alternativeName>
</protein>
<keyword id="KW-0067">ATP-binding</keyword>
<keyword id="KW-0227">DNA damage</keyword>
<keyword id="KW-0234">DNA repair</keyword>
<keyword id="KW-0238">DNA-binding</keyword>
<keyword id="KW-0269">Exonuclease</keyword>
<keyword id="KW-0347">Helicase</keyword>
<keyword id="KW-0378">Hydrolase</keyword>
<keyword id="KW-0413">Isomerase</keyword>
<keyword id="KW-0540">Nuclease</keyword>
<keyword id="KW-0547">Nucleotide-binding</keyword>
<keyword id="KW-1185">Reference proteome</keyword>
<accession>Q8XPE2</accession>
<gene>
    <name evidence="1" type="primary">addA</name>
    <name type="ordered locus">CPE0021</name>
</gene>
<organism>
    <name type="scientific">Clostridium perfringens (strain 13 / Type A)</name>
    <dbReference type="NCBI Taxonomy" id="195102"/>
    <lineage>
        <taxon>Bacteria</taxon>
        <taxon>Bacillati</taxon>
        <taxon>Bacillota</taxon>
        <taxon>Clostridia</taxon>
        <taxon>Eubacteriales</taxon>
        <taxon>Clostridiaceae</taxon>
        <taxon>Clostridium</taxon>
    </lineage>
</organism>
<feature type="chain" id="PRO_0000379261" description="ATP-dependent helicase/nuclease subunit A">
    <location>
        <begin position="1"/>
        <end position="1268"/>
    </location>
</feature>
<feature type="domain" description="UvrD-like helicase ATP-binding" evidence="1">
    <location>
        <begin position="3"/>
        <end position="476"/>
    </location>
</feature>
<feature type="domain" description="UvrD-like helicase C-terminal" evidence="1">
    <location>
        <begin position="528"/>
        <end position="824"/>
    </location>
</feature>
<feature type="binding site" evidence="1">
    <location>
        <begin position="24"/>
        <end position="31"/>
    </location>
    <ligand>
        <name>ATP</name>
        <dbReference type="ChEBI" id="CHEBI:30616"/>
    </ligand>
</feature>
<evidence type="ECO:0000255" key="1">
    <source>
        <dbReference type="HAMAP-Rule" id="MF_01451"/>
    </source>
</evidence>
<sequence>MGTKWTEEQELAINTRKCNLLVAAAAGSGKTAVLVERIIKMITEGENPVDIDKLLVVTFTNAAASEMRERIGDAISKALEKDPSSKVLQRQLALLNRASITTMHSFCLEVIKNNFHLIDLDPGFRIGDQTECELIKQDILADLFEDMYAKDDECFKDLVEAYGGSKSDDNLNSIILKFYNFIMSGPWPEAWLKDKVEEFNINSIEELEGKKWIEVLKESIILDLNNAYSMLTQARDIAEMGGGLEPYLVNINPEIIQVEELKIALSEGIVKFYNNLMGASFGRLKSVRKASVDDERALEKTKSLRDESKKIIENLRDNVFETSLEEAVLGMKKMYPLMKCLSGLVIEFSNRYRDKKREKDILDFNDLEHLCLEILIDKDEEGNIKPSQVALEFKDRFEEVLVDEYQDSNTIQETIVGMVSRRDIENPNVFMVGDVKQSIYKFRQANPELFLEKYINYREFEDSNRKIMLYKNFRSREEIINGVNYIFKTLMSNTVGELEYDEKEALNLGASYGELNEENVEKEYIDEIENLKVAGDIELNILNKAGNKDYSDEDELGEEEEDLDSIQLEARIIGKKINELMNPEDGSHYMVFDKDLGKYRKIKYKDIVILLRATKNWAETFVDELGTYGIPVYADTGTGYFQTIEIRTILALLHIIDNPMQDIYILSALRSPIFSFTSEEFADLRLLNKDKYFFEIIKEVVDGIYDESISKDLKGKCKYFLDYLNKWREKAAYMPIDEFIWFLYSDTSYYGYVGTMPNGVQRQANLRILFQRAKQYESTSFKGLFNFINFINKLKKSSGDMGSAKILGENENVVRIMSIHKSKGLEFPVVILGGTGKQFNKMDLREDILLHETLGIGTNCIDIKKRIKYDTLQKHAIKKKCELEVLSEEMRILYVAFTRAKEKLIITGAVSDLEKSCENWCKASASSEDNRINPGNVLKGKSYLDWIGMALTKHKDGDAIRNIGNGDITLNLDDKSNWSFKSWDRSELLETNNNKKEKNNIDIFESNNWIESKKDIKEVIEIRDRLGFKYKYIESCNTPSNISVTELKRAHQEEEFMQESYNIIDNESNEENKKEKIKRKPRFMEERQEEFSAAKKGTITHFVMQHIDLDKVTYIDEIREEVLKMVKKELLTEEEGKVVNVFKIQKFFKSDLGQRMLSSYKSGKKVYRELPFITEIPSSIIEKNLDPKIYGEEKVRLQGIIDAFFKEEDGYVLLDYKTDYVKEGEEENFINKYKIQINLYKDTLNKILGEEVKEAYLYSFYLEKELKI</sequence>
<reference key="1">
    <citation type="journal article" date="2002" name="Proc. Natl. Acad. Sci. U.S.A.">
        <title>Complete genome sequence of Clostridium perfringens, an anaerobic flesh-eater.</title>
        <authorList>
            <person name="Shimizu T."/>
            <person name="Ohtani K."/>
            <person name="Hirakawa H."/>
            <person name="Ohshima K."/>
            <person name="Yamashita A."/>
            <person name="Shiba T."/>
            <person name="Ogasawara N."/>
            <person name="Hattori M."/>
            <person name="Kuhara S."/>
            <person name="Hayashi H."/>
        </authorList>
    </citation>
    <scope>NUCLEOTIDE SEQUENCE [LARGE SCALE GENOMIC DNA]</scope>
    <source>
        <strain>13 / Type A</strain>
    </source>
</reference>
<name>ADDA_CLOPE</name>
<proteinExistence type="inferred from homology"/>